<protein>
    <recommendedName>
        <fullName evidence="1">Endoribonuclease YbeY</fullName>
        <ecNumber evidence="1">3.1.-.-</ecNumber>
    </recommendedName>
</protein>
<reference key="1">
    <citation type="journal article" date="2008" name="PLoS ONE">
        <title>Genome sequence of the saprophyte Leptospira biflexa provides insights into the evolution of Leptospira and the pathogenesis of leptospirosis.</title>
        <authorList>
            <person name="Picardeau M."/>
            <person name="Bulach D.M."/>
            <person name="Bouchier C."/>
            <person name="Zuerner R.L."/>
            <person name="Zidane N."/>
            <person name="Wilson P.J."/>
            <person name="Creno S."/>
            <person name="Kuczek E.S."/>
            <person name="Bommezzadri S."/>
            <person name="Davis J.C."/>
            <person name="McGrath A."/>
            <person name="Johnson M.J."/>
            <person name="Boursaux-Eude C."/>
            <person name="Seemann T."/>
            <person name="Rouy Z."/>
            <person name="Coppel R.L."/>
            <person name="Rood J.I."/>
            <person name="Lajus A."/>
            <person name="Davies J.K."/>
            <person name="Medigue C."/>
            <person name="Adler B."/>
        </authorList>
    </citation>
    <scope>NUCLEOTIDE SEQUENCE [LARGE SCALE GENOMIC DNA]</scope>
    <source>
        <strain>Patoc 1 / Ames</strain>
    </source>
</reference>
<proteinExistence type="inferred from homology"/>
<accession>B0SB32</accession>
<sequence>MNPSLSVFTHWNDESNQSEIFSDPVISNCEKILRFLAPEFLHSLELSIYLVNDSLMAEINEERRGKPATTDVLSFPLYSEHPPIPVQILGEVVISMETCKKQAMEIGHGLVDEFYRLLVHGILHNFGYDHETNEEDALLMRKMEDECLDLVFAT</sequence>
<evidence type="ECO:0000255" key="1">
    <source>
        <dbReference type="HAMAP-Rule" id="MF_00009"/>
    </source>
</evidence>
<organism>
    <name type="scientific">Leptospira biflexa serovar Patoc (strain Patoc 1 / Ames)</name>
    <dbReference type="NCBI Taxonomy" id="355278"/>
    <lineage>
        <taxon>Bacteria</taxon>
        <taxon>Pseudomonadati</taxon>
        <taxon>Spirochaetota</taxon>
        <taxon>Spirochaetia</taxon>
        <taxon>Leptospirales</taxon>
        <taxon>Leptospiraceae</taxon>
        <taxon>Leptospira</taxon>
    </lineage>
</organism>
<feature type="chain" id="PRO_0000336012" description="Endoribonuclease YbeY">
    <location>
        <begin position="1"/>
        <end position="154"/>
    </location>
</feature>
<feature type="binding site" evidence="1">
    <location>
        <position position="120"/>
    </location>
    <ligand>
        <name>Zn(2+)</name>
        <dbReference type="ChEBI" id="CHEBI:29105"/>
        <note>catalytic</note>
    </ligand>
</feature>
<feature type="binding site" evidence="1">
    <location>
        <position position="124"/>
    </location>
    <ligand>
        <name>Zn(2+)</name>
        <dbReference type="ChEBI" id="CHEBI:29105"/>
        <note>catalytic</note>
    </ligand>
</feature>
<feature type="binding site" evidence="1">
    <location>
        <position position="130"/>
    </location>
    <ligand>
        <name>Zn(2+)</name>
        <dbReference type="ChEBI" id="CHEBI:29105"/>
        <note>catalytic</note>
    </ligand>
</feature>
<dbReference type="EC" id="3.1.-.-" evidence="1"/>
<dbReference type="EMBL" id="CP000777">
    <property type="protein sequence ID" value="ABZ94538.1"/>
    <property type="molecule type" value="Genomic_DNA"/>
</dbReference>
<dbReference type="RefSeq" id="WP_012389064.1">
    <property type="nucleotide sequence ID" value="NC_010842.1"/>
</dbReference>
<dbReference type="SMR" id="B0SB32"/>
<dbReference type="KEGG" id="lbf:LBF_2038"/>
<dbReference type="HOGENOM" id="CLU_106710_3_3_12"/>
<dbReference type="GO" id="GO:0005737">
    <property type="term" value="C:cytoplasm"/>
    <property type="evidence" value="ECO:0007669"/>
    <property type="project" value="UniProtKB-SubCell"/>
</dbReference>
<dbReference type="GO" id="GO:0004222">
    <property type="term" value="F:metalloendopeptidase activity"/>
    <property type="evidence" value="ECO:0007669"/>
    <property type="project" value="InterPro"/>
</dbReference>
<dbReference type="GO" id="GO:0004521">
    <property type="term" value="F:RNA endonuclease activity"/>
    <property type="evidence" value="ECO:0007669"/>
    <property type="project" value="UniProtKB-UniRule"/>
</dbReference>
<dbReference type="GO" id="GO:0008270">
    <property type="term" value="F:zinc ion binding"/>
    <property type="evidence" value="ECO:0007669"/>
    <property type="project" value="UniProtKB-UniRule"/>
</dbReference>
<dbReference type="GO" id="GO:0006364">
    <property type="term" value="P:rRNA processing"/>
    <property type="evidence" value="ECO:0007669"/>
    <property type="project" value="UniProtKB-UniRule"/>
</dbReference>
<dbReference type="Gene3D" id="3.40.390.30">
    <property type="entry name" value="Metalloproteases ('zincins'), catalytic domain"/>
    <property type="match status" value="1"/>
</dbReference>
<dbReference type="HAMAP" id="MF_00009">
    <property type="entry name" value="Endoribonucl_YbeY"/>
    <property type="match status" value="1"/>
</dbReference>
<dbReference type="InterPro" id="IPR023091">
    <property type="entry name" value="MetalPrtase_cat_dom_sf_prd"/>
</dbReference>
<dbReference type="InterPro" id="IPR002036">
    <property type="entry name" value="YbeY"/>
</dbReference>
<dbReference type="NCBIfam" id="TIGR00043">
    <property type="entry name" value="rRNA maturation RNase YbeY"/>
    <property type="match status" value="1"/>
</dbReference>
<dbReference type="PANTHER" id="PTHR46986">
    <property type="entry name" value="ENDORIBONUCLEASE YBEY, CHLOROPLASTIC"/>
    <property type="match status" value="1"/>
</dbReference>
<dbReference type="PANTHER" id="PTHR46986:SF1">
    <property type="entry name" value="ENDORIBONUCLEASE YBEY, CHLOROPLASTIC"/>
    <property type="match status" value="1"/>
</dbReference>
<dbReference type="Pfam" id="PF02130">
    <property type="entry name" value="YbeY"/>
    <property type="match status" value="1"/>
</dbReference>
<dbReference type="SUPFAM" id="SSF55486">
    <property type="entry name" value="Metalloproteases ('zincins'), catalytic domain"/>
    <property type="match status" value="1"/>
</dbReference>
<keyword id="KW-0963">Cytoplasm</keyword>
<keyword id="KW-0255">Endonuclease</keyword>
<keyword id="KW-0378">Hydrolase</keyword>
<keyword id="KW-0479">Metal-binding</keyword>
<keyword id="KW-0540">Nuclease</keyword>
<keyword id="KW-0690">Ribosome biogenesis</keyword>
<keyword id="KW-0698">rRNA processing</keyword>
<keyword id="KW-0862">Zinc</keyword>
<gene>
    <name evidence="1" type="primary">ybeY</name>
    <name type="ordered locus">LBF_2038</name>
</gene>
<name>YBEY_LEPBA</name>
<comment type="function">
    <text evidence="1">Single strand-specific metallo-endoribonuclease involved in late-stage 70S ribosome quality control and in maturation of the 3' terminus of the 16S rRNA.</text>
</comment>
<comment type="cofactor">
    <cofactor evidence="1">
        <name>Zn(2+)</name>
        <dbReference type="ChEBI" id="CHEBI:29105"/>
    </cofactor>
    <text evidence="1">Binds 1 zinc ion.</text>
</comment>
<comment type="subcellular location">
    <subcellularLocation>
        <location evidence="1">Cytoplasm</location>
    </subcellularLocation>
</comment>
<comment type="similarity">
    <text evidence="1">Belongs to the endoribonuclease YbeY family.</text>
</comment>